<organism>
    <name type="scientific">Saccharomyces cerevisiae (strain ATCC 204508 / S288c)</name>
    <name type="common">Baker's yeast</name>
    <dbReference type="NCBI Taxonomy" id="559292"/>
    <lineage>
        <taxon>Eukaryota</taxon>
        <taxon>Fungi</taxon>
        <taxon>Dikarya</taxon>
        <taxon>Ascomycota</taxon>
        <taxon>Saccharomycotina</taxon>
        <taxon>Saccharomycetes</taxon>
        <taxon>Saccharomycetales</taxon>
        <taxon>Saccharomycetaceae</taxon>
        <taxon>Saccharomyces</taxon>
    </lineage>
</organism>
<feature type="chain" id="PRO_0000089051" description="Actin">
    <location>
        <begin position="1"/>
        <end position="375"/>
    </location>
</feature>
<feature type="site" description="Not methylated" evidence="1">
    <location>
        <position position="73"/>
    </location>
</feature>
<feature type="modified residue" description="N-acetylmethionine" evidence="3 9">
    <location>
        <position position="1"/>
    </location>
</feature>
<feature type="cross-link" description="Glycyl lysine isopeptide (Lys-Gly) (interchain with G-Cter in ubiquitin)" evidence="8">
    <location>
        <position position="191"/>
    </location>
</feature>
<feature type="sequence variant" description="In strain: CBS 1907.">
    <original>Y</original>
    <variation>F</variation>
    <location>
        <position position="143"/>
    </location>
</feature>
<feature type="mutagenesis site" description="No effect on growth kinetics nor on actin cytoskeleton morphology. Resistant to Chivosazole F inhibition of polymerization. Increases penetrance of Latrunculin A inhibition of polymerization. No effect on Chondramide inhibition of polymerization." evidence="5">
    <original>R</original>
    <variation>K</variation>
    <location>
        <position position="183"/>
    </location>
</feature>
<feature type="mutagenesis site" description="No effect on growth kinetics nor on actin cytoskeleton morphology. Resistant to Chivosazole F and Latrunculin A inhibition of polymerization. No effect on Chondramide inhibition of polymerization." evidence="5">
    <original>R</original>
    <variation>K</variation>
    <location>
        <position position="335"/>
    </location>
</feature>
<feature type="sequence conflict" description="In Ref. 2; CAA24598." evidence="6" ref="2">
    <original>I</original>
    <variation>L</variation>
    <location>
        <position position="178"/>
    </location>
</feature>
<feature type="sequence conflict" description="In Ref. 2; CAA24598." evidence="6" ref="2">
    <original>G</original>
    <variation>S</variation>
    <location>
        <position position="308"/>
    </location>
</feature>
<feature type="strand" evidence="12">
    <location>
        <begin position="4"/>
        <end position="6"/>
    </location>
</feature>
<feature type="strand" evidence="10">
    <location>
        <begin position="8"/>
        <end position="12"/>
    </location>
</feature>
<feature type="strand" evidence="10">
    <location>
        <begin position="14"/>
        <end position="21"/>
    </location>
</feature>
<feature type="strand" evidence="10">
    <location>
        <begin position="28"/>
        <end position="32"/>
    </location>
</feature>
<feature type="strand" evidence="10">
    <location>
        <begin position="35"/>
        <end position="40"/>
    </location>
</feature>
<feature type="turn" evidence="11">
    <location>
        <begin position="45"/>
        <end position="47"/>
    </location>
</feature>
<feature type="helix" evidence="10">
    <location>
        <begin position="56"/>
        <end position="60"/>
    </location>
</feature>
<feature type="helix" evidence="10">
    <location>
        <begin position="62"/>
        <end position="64"/>
    </location>
</feature>
<feature type="strand" evidence="10">
    <location>
        <begin position="65"/>
        <end position="68"/>
    </location>
</feature>
<feature type="strand" evidence="11">
    <location>
        <begin position="70"/>
        <end position="72"/>
    </location>
</feature>
<feature type="strand" evidence="11">
    <location>
        <begin position="75"/>
        <end position="77"/>
    </location>
</feature>
<feature type="helix" evidence="10">
    <location>
        <begin position="79"/>
        <end position="91"/>
    </location>
</feature>
<feature type="turn" evidence="10">
    <location>
        <begin position="92"/>
        <end position="94"/>
    </location>
</feature>
<feature type="helix" evidence="10">
    <location>
        <begin position="98"/>
        <end position="100"/>
    </location>
</feature>
<feature type="strand" evidence="10">
    <location>
        <begin position="103"/>
        <end position="107"/>
    </location>
</feature>
<feature type="helix" evidence="10">
    <location>
        <begin position="113"/>
        <end position="125"/>
    </location>
</feature>
<feature type="strand" evidence="10">
    <location>
        <begin position="130"/>
        <end position="136"/>
    </location>
</feature>
<feature type="helix" evidence="10">
    <location>
        <begin position="137"/>
        <end position="144"/>
    </location>
</feature>
<feature type="strand" evidence="10">
    <location>
        <begin position="148"/>
        <end position="155"/>
    </location>
</feature>
<feature type="strand" evidence="10">
    <location>
        <begin position="160"/>
        <end position="166"/>
    </location>
</feature>
<feature type="helix" evidence="10">
    <location>
        <begin position="172"/>
        <end position="174"/>
    </location>
</feature>
<feature type="strand" evidence="10">
    <location>
        <begin position="176"/>
        <end position="179"/>
    </location>
</feature>
<feature type="helix" evidence="10">
    <location>
        <begin position="182"/>
        <end position="194"/>
    </location>
</feature>
<feature type="turn" evidence="10">
    <location>
        <begin position="195"/>
        <end position="197"/>
    </location>
</feature>
<feature type="helix" evidence="10">
    <location>
        <begin position="203"/>
        <end position="216"/>
    </location>
</feature>
<feature type="helix" evidence="10">
    <location>
        <begin position="223"/>
        <end position="228"/>
    </location>
</feature>
<feature type="turn" evidence="10">
    <location>
        <begin position="229"/>
        <end position="231"/>
    </location>
</feature>
<feature type="strand" evidence="10">
    <location>
        <begin position="234"/>
        <end position="236"/>
    </location>
</feature>
<feature type="strand" evidence="10">
    <location>
        <begin position="238"/>
        <end position="241"/>
    </location>
</feature>
<feature type="strand" evidence="13">
    <location>
        <begin position="243"/>
        <end position="245"/>
    </location>
</feature>
<feature type="strand" evidence="10">
    <location>
        <begin position="247"/>
        <end position="250"/>
    </location>
</feature>
<feature type="helix" evidence="10">
    <location>
        <begin position="253"/>
        <end position="256"/>
    </location>
</feature>
<feature type="helix" evidence="10">
    <location>
        <begin position="258"/>
        <end position="261"/>
    </location>
</feature>
<feature type="helix" evidence="10">
    <location>
        <begin position="264"/>
        <end position="267"/>
    </location>
</feature>
<feature type="helix" evidence="10">
    <location>
        <begin position="274"/>
        <end position="283"/>
    </location>
</feature>
<feature type="helix" evidence="10">
    <location>
        <begin position="287"/>
        <end position="294"/>
    </location>
</feature>
<feature type="strand" evidence="10">
    <location>
        <begin position="297"/>
        <end position="301"/>
    </location>
</feature>
<feature type="helix" evidence="10">
    <location>
        <begin position="302"/>
        <end position="304"/>
    </location>
</feature>
<feature type="helix" evidence="10">
    <location>
        <begin position="309"/>
        <end position="320"/>
    </location>
</feature>
<feature type="strand" evidence="12">
    <location>
        <begin position="323"/>
        <end position="325"/>
    </location>
</feature>
<feature type="turn" evidence="10">
    <location>
        <begin position="333"/>
        <end position="336"/>
    </location>
</feature>
<feature type="helix" evidence="10">
    <location>
        <begin position="338"/>
        <end position="348"/>
    </location>
</feature>
<feature type="helix" evidence="10">
    <location>
        <begin position="350"/>
        <end position="354"/>
    </location>
</feature>
<feature type="strand" evidence="10">
    <location>
        <begin position="356"/>
        <end position="358"/>
    </location>
</feature>
<feature type="helix" evidence="10">
    <location>
        <begin position="359"/>
        <end position="365"/>
    </location>
</feature>
<feature type="helix" evidence="10">
    <location>
        <begin position="367"/>
        <end position="369"/>
    </location>
</feature>
<feature type="helix" evidence="10">
    <location>
        <begin position="370"/>
        <end position="373"/>
    </location>
</feature>
<proteinExistence type="evidence at protein level"/>
<accession>P60010</accession>
<accession>D6VTJ1</accession>
<accession>P02579</accession>
<accession>Q9P3X6</accession>
<accession>Q9P3X7</accession>
<comment type="function">
    <text>Actins are highly conserved proteins that are involved in various types of cell motility and are ubiquitously expressed in all eukaryotic cells.</text>
</comment>
<comment type="catalytic activity">
    <reaction evidence="7">
        <text>ATP + H2O = ADP + phosphate + H(+)</text>
        <dbReference type="Rhea" id="RHEA:13065"/>
        <dbReference type="ChEBI" id="CHEBI:15377"/>
        <dbReference type="ChEBI" id="CHEBI:15378"/>
        <dbReference type="ChEBI" id="CHEBI:30616"/>
        <dbReference type="ChEBI" id="CHEBI:43474"/>
        <dbReference type="ChEBI" id="CHEBI:456216"/>
    </reaction>
</comment>
<comment type="subunit">
    <text evidence="2 4 5 6">Polymerization of globular actin (G-actin) leads to a structural filament (F-actin) in the form of a two-stranded helix (Probable). Treatments with Lantrunculin A, the microbial peptide Chondramide or the microbial metabolite Chivazole F inhibit actin polymerization (PubMed:28796488). Each actin can bind to 4 others. Interacts with YIH1 (via C-terminus); this interaction occurs in a GCN1-independent manner (PubMed:15126500, PubMed:21239490). Component of the INO80 complex. Component of the SWR1 complex. Component of the NuA4 complex.</text>
</comment>
<comment type="interaction">
    <interactant intactId="EBI-2169">
        <id>P60010</id>
    </interactant>
    <interactant intactId="EBI-2169">
        <id>P60010</id>
        <label>ACT1</label>
    </interactant>
    <organismsDiffer>false</organismsDiffer>
    <experiments>6</experiments>
</comment>
<comment type="interaction">
    <interactant intactId="EBI-2169">
        <id>P60010</id>
    </interactant>
    <interactant intactId="EBI-2406">
        <id>P46680</id>
        <label>AIP1</label>
    </interactant>
    <organismsDiffer>false</organismsDiffer>
    <experiments>3</experiments>
</comment>
<comment type="interaction">
    <interactant intactId="EBI-2169">
        <id>P60010</id>
    </interactant>
    <interactant intactId="EBI-4853">
        <id>Q03048</id>
        <label>COF1</label>
    </interactant>
    <organismsDiffer>false</organismsDiffer>
    <experiments>3</experiments>
</comment>
<comment type="interaction">
    <interactant intactId="EBI-2169">
        <id>P60010</id>
    </interactant>
    <interactant intactId="EBI-4950">
        <id>Q06440</id>
        <label>CRN1</label>
    </interactant>
    <organismsDiffer>false</organismsDiffer>
    <experiments>3</experiments>
</comment>
<comment type="interaction">
    <interactant intactId="EBI-2169">
        <id>P60010</id>
    </interactant>
    <interactant intactId="EBI-8659">
        <id>P02829</id>
        <label>HSP82</label>
    </interactant>
    <organismsDiffer>false</organismsDiffer>
    <experiments>2</experiments>
</comment>
<comment type="interaction">
    <interactant intactId="EBI-2169">
        <id>P60010</id>
    </interactant>
    <interactant intactId="EBI-10022">
        <id>Q12446</id>
        <label>LAS17</label>
    </interactant>
    <organismsDiffer>false</organismsDiffer>
    <experiments>4</experiments>
</comment>
<comment type="interaction">
    <interactant intactId="EBI-2169">
        <id>P60010</id>
    </interactant>
    <interactant intactId="EBI-13892">
        <id>P07274</id>
        <label>PFY1</label>
    </interactant>
    <organismsDiffer>false</organismsDiffer>
    <experiments>5</experiments>
</comment>
<comment type="interaction">
    <interactant intactId="EBI-2169">
        <id>P60010</id>
    </interactant>
    <interactant intactId="EBI-14500">
        <id>P39743</id>
        <label>RVS167</label>
    </interactant>
    <organismsDiffer>false</organismsDiffer>
    <experiments>4</experiments>
</comment>
<comment type="interaction">
    <interactant intactId="EBI-2169">
        <id>P60010</id>
    </interactant>
    <interactant intactId="EBI-6931">
        <id>P32599</id>
        <label>SAC6</label>
    </interactant>
    <organismsDiffer>false</organismsDiffer>
    <experiments>4</experiments>
</comment>
<comment type="interaction">
    <interactant intactId="EBI-2169">
        <id>P60010</id>
    </interactant>
    <interactant intactId="EBI-4024">
        <id>P17555</id>
        <label>SRV2</label>
    </interactant>
    <organismsDiffer>false</organismsDiffer>
    <experiments>8</experiments>
</comment>
<comment type="interaction">
    <interactant intactId="EBI-2169">
        <id>P60010</id>
    </interactant>
    <interactant intactId="EBI-19045">
        <id>P12612</id>
        <label>TCP1</label>
    </interactant>
    <organismsDiffer>false</organismsDiffer>
    <experiments>3</experiments>
</comment>
<comment type="interaction">
    <interactant intactId="EBI-2169">
        <id>P60010</id>
    </interactant>
    <interactant intactId="EBI-543750">
        <id>P0A6F5</id>
        <label>groEL</label>
    </interactant>
    <organismsDiffer>true</organismsDiffer>
    <experiments>5</experiments>
</comment>
<comment type="subcellular location">
    <subcellularLocation>
        <location>Cytoplasm</location>
        <location>Cytoskeleton</location>
    </subcellularLocation>
</comment>
<comment type="similarity">
    <text evidence="6">Belongs to the actin family.</text>
</comment>
<name>ACT_YEAST</name>
<keyword id="KW-0002">3D-structure</keyword>
<keyword id="KW-0007">Acetylation</keyword>
<keyword id="KW-0067">ATP-binding</keyword>
<keyword id="KW-0963">Cytoplasm</keyword>
<keyword id="KW-0206">Cytoskeleton</keyword>
<keyword id="KW-0903">Direct protein sequencing</keyword>
<keyword id="KW-0378">Hydrolase</keyword>
<keyword id="KW-1017">Isopeptide bond</keyword>
<keyword id="KW-0547">Nucleotide-binding</keyword>
<keyword id="KW-1185">Reference proteome</keyword>
<keyword id="KW-0832">Ubl conjugation</keyword>
<dbReference type="EC" id="3.6.4.-" evidence="7"/>
<dbReference type="EMBL" id="V01288">
    <property type="protein sequence ID" value="CAA24597.1"/>
    <property type="molecule type" value="Genomic_DNA"/>
</dbReference>
<dbReference type="EMBL" id="V01289">
    <property type="protein sequence ID" value="CAA24598.1"/>
    <property type="status" value="ALT_SEQ"/>
    <property type="molecule type" value="Genomic_DNA"/>
</dbReference>
<dbReference type="EMBL" id="V01290">
    <property type="protein sequence ID" value="CAA24599.1"/>
    <property type="molecule type" value="Genomic_DNA"/>
</dbReference>
<dbReference type="EMBL" id="L00026">
    <property type="protein sequence ID" value="AAA34391.1"/>
    <property type="molecule type" value="Genomic_DNA"/>
</dbReference>
<dbReference type="EMBL" id="D50617">
    <property type="protein sequence ID" value="BAA21512.1"/>
    <property type="molecule type" value="Genomic_DNA"/>
</dbReference>
<dbReference type="EMBL" id="AJ389075">
    <property type="protein sequence ID" value="CAC00716.1"/>
    <property type="molecule type" value="Genomic_DNA"/>
</dbReference>
<dbReference type="EMBL" id="AJ389076">
    <property type="protein sequence ID" value="CAC00717.1"/>
    <property type="molecule type" value="Genomic_DNA"/>
</dbReference>
<dbReference type="EMBL" id="BK006940">
    <property type="protein sequence ID" value="DAA12401.1"/>
    <property type="molecule type" value="Genomic_DNA"/>
</dbReference>
<dbReference type="PIR" id="A03005">
    <property type="entry name" value="ATBY"/>
</dbReference>
<dbReference type="PIR" id="JS0702">
    <property type="entry name" value="JS0702"/>
</dbReference>
<dbReference type="RefSeq" id="NP_116614.1">
    <property type="nucleotide sequence ID" value="NM_001179927.1"/>
</dbReference>
<dbReference type="PDB" id="1YAG">
    <property type="method" value="X-ray"/>
    <property type="resolution" value="1.90 A"/>
    <property type="chains" value="A=1-375"/>
</dbReference>
<dbReference type="PDB" id="1YVN">
    <property type="method" value="X-ray"/>
    <property type="resolution" value="2.10 A"/>
    <property type="chains" value="A=1-375"/>
</dbReference>
<dbReference type="PDB" id="5NBL">
    <property type="method" value="X-ray"/>
    <property type="resolution" value="2.80 A"/>
    <property type="chains" value="C/D=1-375"/>
</dbReference>
<dbReference type="PDB" id="5NBM">
    <property type="method" value="X-ray"/>
    <property type="resolution" value="3.40 A"/>
    <property type="chains" value="C/D=1-375"/>
</dbReference>
<dbReference type="PDB" id="5NBN">
    <property type="method" value="X-ray"/>
    <property type="resolution" value="4.00 A"/>
    <property type="chains" value="C/D=1-375"/>
</dbReference>
<dbReference type="PDB" id="5Y81">
    <property type="method" value="EM"/>
    <property type="resolution" value="4.70 A"/>
    <property type="chains" value="G=1-375"/>
</dbReference>
<dbReference type="PDB" id="7VVY">
    <property type="method" value="EM"/>
    <property type="resolution" value="3.10 A"/>
    <property type="chains" value="G=1-375"/>
</dbReference>
<dbReference type="PDB" id="7VVZ">
    <property type="method" value="EM"/>
    <property type="resolution" value="8.80 A"/>
    <property type="chains" value="G=1-375"/>
</dbReference>
<dbReference type="PDB" id="7YFN">
    <property type="method" value="EM"/>
    <property type="resolution" value="3.80 A"/>
    <property type="chains" value="A=4-375"/>
</dbReference>
<dbReference type="PDB" id="7YFP">
    <property type="method" value="EM"/>
    <property type="resolution" value="4.00 A"/>
    <property type="chains" value="A=4-375"/>
</dbReference>
<dbReference type="PDB" id="8A5A">
    <property type="method" value="EM"/>
    <property type="resolution" value="3.30 A"/>
    <property type="chains" value="V=1-375"/>
</dbReference>
<dbReference type="PDB" id="8A5O">
    <property type="method" value="EM"/>
    <property type="resolution" value="3.20 A"/>
    <property type="chains" value="V=1-375"/>
</dbReference>
<dbReference type="PDB" id="8ESC">
    <property type="method" value="EM"/>
    <property type="resolution" value="3.10 A"/>
    <property type="chains" value="A=1-375"/>
</dbReference>
<dbReference type="PDB" id="9GO5">
    <property type="method" value="EM"/>
    <property type="resolution" value="2.50 A"/>
    <property type="chains" value="A/B/C/D/E=1-375"/>
</dbReference>
<dbReference type="PDBsum" id="1YAG"/>
<dbReference type="PDBsum" id="1YVN"/>
<dbReference type="PDBsum" id="5NBL"/>
<dbReference type="PDBsum" id="5NBM"/>
<dbReference type="PDBsum" id="5NBN"/>
<dbReference type="PDBsum" id="5Y81"/>
<dbReference type="PDBsum" id="7VVY"/>
<dbReference type="PDBsum" id="7VVZ"/>
<dbReference type="PDBsum" id="7YFN"/>
<dbReference type="PDBsum" id="7YFP"/>
<dbReference type="PDBsum" id="8A5A"/>
<dbReference type="PDBsum" id="8A5O"/>
<dbReference type="PDBsum" id="8ESC"/>
<dbReference type="PDBsum" id="9GO5"/>
<dbReference type="EMDB" id="EMD-15163"/>
<dbReference type="EMDB" id="EMD-15177"/>
<dbReference type="EMDB" id="EMD-15179"/>
<dbReference type="EMDB" id="EMD-15186"/>
<dbReference type="EMDB" id="EMD-28575"/>
<dbReference type="EMDB" id="EMD-32149"/>
<dbReference type="EMDB" id="EMD-32150"/>
<dbReference type="EMDB" id="EMD-33794"/>
<dbReference type="EMDB" id="EMD-33796"/>
<dbReference type="EMDB" id="EMD-51491"/>
<dbReference type="EMDB" id="EMD-6816"/>
<dbReference type="SMR" id="P60010"/>
<dbReference type="BioGRID" id="31107">
    <property type="interactions" value="2340"/>
</dbReference>
<dbReference type="ComplexPortal" id="CPX-2122">
    <property type="entry name" value="Swr1 chromatin remodelling complex"/>
</dbReference>
<dbReference type="ComplexPortal" id="CPX-3155">
    <property type="entry name" value="NuA4 histone acetyltransferase complex"/>
</dbReference>
<dbReference type="ComplexPortal" id="CPX-863">
    <property type="entry name" value="INO80 chromatin remodeling complex"/>
</dbReference>
<dbReference type="DIP" id="DIP-310N"/>
<dbReference type="FunCoup" id="P60010">
    <property type="interactions" value="1827"/>
</dbReference>
<dbReference type="IntAct" id="P60010">
    <property type="interactions" value="239"/>
</dbReference>
<dbReference type="MINT" id="P60010"/>
<dbReference type="STRING" id="4932.YFL039C"/>
<dbReference type="BindingDB" id="P60010"/>
<dbReference type="MoonDB" id="P60010">
    <property type="type" value="Predicted"/>
</dbReference>
<dbReference type="CarbonylDB" id="P60010"/>
<dbReference type="iPTMnet" id="P60010"/>
<dbReference type="PaxDb" id="4932-YFL039C"/>
<dbReference type="PeptideAtlas" id="P60010"/>
<dbReference type="ABCD" id="P60010">
    <property type="antibodies" value="1 sequenced antibody"/>
</dbReference>
<dbReference type="EnsemblFungi" id="YFL039C_mRNA">
    <property type="protein sequence ID" value="YFL039C"/>
    <property type="gene ID" value="YFL039C"/>
</dbReference>
<dbReference type="GeneID" id="850504"/>
<dbReference type="KEGG" id="sce:YFL039C"/>
<dbReference type="AGR" id="SGD:S000001855"/>
<dbReference type="SGD" id="S000001855">
    <property type="gene designation" value="ACT1"/>
</dbReference>
<dbReference type="VEuPathDB" id="FungiDB:YFL039C"/>
<dbReference type="eggNOG" id="KOG0676">
    <property type="taxonomic scope" value="Eukaryota"/>
</dbReference>
<dbReference type="GeneTree" id="ENSGT00950000182960"/>
<dbReference type="HOGENOM" id="CLU_027965_0_2_1"/>
<dbReference type="InParanoid" id="P60010"/>
<dbReference type="OMA" id="FHTTAER"/>
<dbReference type="OrthoDB" id="5132116at2759"/>
<dbReference type="BioCyc" id="YEAST:G3O-30423-MONOMER"/>
<dbReference type="Reactome" id="R-SCE-8980692">
    <property type="pathway name" value="RHOA GTPase cycle"/>
</dbReference>
<dbReference type="Reactome" id="R-SCE-9013026">
    <property type="pathway name" value="RHOB GTPase cycle"/>
</dbReference>
<dbReference type="BioGRID-ORCS" id="850504">
    <property type="hits" value="4 hits in 10 CRISPR screens"/>
</dbReference>
<dbReference type="EvolutionaryTrace" id="P60010"/>
<dbReference type="PRO" id="PR:P60010"/>
<dbReference type="Proteomes" id="UP000002311">
    <property type="component" value="Chromosome VI"/>
</dbReference>
<dbReference type="RNAct" id="P60010">
    <property type="molecule type" value="protein"/>
</dbReference>
<dbReference type="GO" id="GO:0030479">
    <property type="term" value="C:actin cortical patch"/>
    <property type="evidence" value="ECO:0000314"/>
    <property type="project" value="SGD"/>
</dbReference>
<dbReference type="GO" id="GO:0015629">
    <property type="term" value="C:actin cytoskeleton"/>
    <property type="evidence" value="ECO:0000318"/>
    <property type="project" value="GO_Central"/>
</dbReference>
<dbReference type="GO" id="GO:0005884">
    <property type="term" value="C:actin filament"/>
    <property type="evidence" value="ECO:0000314"/>
    <property type="project" value="SGD"/>
</dbReference>
<dbReference type="GO" id="GO:0032432">
    <property type="term" value="C:actin filament bundle"/>
    <property type="evidence" value="ECO:0000314"/>
    <property type="project" value="SGD"/>
</dbReference>
<dbReference type="GO" id="GO:0000142">
    <property type="term" value="C:cellular bud neck contractile ring"/>
    <property type="evidence" value="ECO:0000314"/>
    <property type="project" value="SGD"/>
</dbReference>
<dbReference type="GO" id="GO:0000785">
    <property type="term" value="C:chromatin"/>
    <property type="evidence" value="ECO:0000314"/>
    <property type="project" value="ComplexPortal"/>
</dbReference>
<dbReference type="GO" id="GO:0031011">
    <property type="term" value="C:Ino80 complex"/>
    <property type="evidence" value="ECO:0000353"/>
    <property type="project" value="SGD"/>
</dbReference>
<dbReference type="GO" id="GO:0035267">
    <property type="term" value="C:NuA4 histone acetyltransferase complex"/>
    <property type="evidence" value="ECO:0000314"/>
    <property type="project" value="SGD"/>
</dbReference>
<dbReference type="GO" id="GO:0005634">
    <property type="term" value="C:nucleus"/>
    <property type="evidence" value="ECO:0000314"/>
    <property type="project" value="ComplexPortal"/>
</dbReference>
<dbReference type="GO" id="GO:0000812">
    <property type="term" value="C:Swr1 complex"/>
    <property type="evidence" value="ECO:0000314"/>
    <property type="project" value="SGD"/>
</dbReference>
<dbReference type="GO" id="GO:0005524">
    <property type="term" value="F:ATP binding"/>
    <property type="evidence" value="ECO:0000314"/>
    <property type="project" value="WormBase"/>
</dbReference>
<dbReference type="GO" id="GO:0016887">
    <property type="term" value="F:ATP hydrolysis activity"/>
    <property type="evidence" value="ECO:0000314"/>
    <property type="project" value="SGD"/>
</dbReference>
<dbReference type="GO" id="GO:0042802">
    <property type="term" value="F:identical protein binding"/>
    <property type="evidence" value="ECO:0000353"/>
    <property type="project" value="IntAct"/>
</dbReference>
<dbReference type="GO" id="GO:0005200">
    <property type="term" value="F:structural constituent of cytoskeleton"/>
    <property type="evidence" value="ECO:0000314"/>
    <property type="project" value="SGD"/>
</dbReference>
<dbReference type="GO" id="GO:0030476">
    <property type="term" value="P:ascospore wall assembly"/>
    <property type="evidence" value="ECO:0000314"/>
    <property type="project" value="SGD"/>
</dbReference>
<dbReference type="GO" id="GO:0006338">
    <property type="term" value="P:chromatin remodeling"/>
    <property type="evidence" value="ECO:0000314"/>
    <property type="project" value="ComplexPortal"/>
</dbReference>
<dbReference type="GO" id="GO:0006281">
    <property type="term" value="P:DNA repair"/>
    <property type="evidence" value="ECO:0000314"/>
    <property type="project" value="SGD"/>
</dbReference>
<dbReference type="GO" id="GO:0006351">
    <property type="term" value="P:DNA-templated transcription"/>
    <property type="evidence" value="ECO:0000303"/>
    <property type="project" value="ComplexPortal"/>
</dbReference>
<dbReference type="GO" id="GO:0006897">
    <property type="term" value="P:endocytosis"/>
    <property type="evidence" value="ECO:0000315"/>
    <property type="project" value="SGD"/>
</dbReference>
<dbReference type="GO" id="GO:0030010">
    <property type="term" value="P:establishment of cell polarity"/>
    <property type="evidence" value="ECO:0000316"/>
    <property type="project" value="SGD"/>
</dbReference>
<dbReference type="GO" id="GO:1902404">
    <property type="term" value="P:mitotic actomyosin contractile ring contraction"/>
    <property type="evidence" value="ECO:0000315"/>
    <property type="project" value="SGD"/>
</dbReference>
<dbReference type="GO" id="GO:0009306">
    <property type="term" value="P:protein secretion"/>
    <property type="evidence" value="ECO:0000315"/>
    <property type="project" value="SGD"/>
</dbReference>
<dbReference type="GO" id="GO:0006355">
    <property type="term" value="P:regulation of DNA-templated transcription"/>
    <property type="evidence" value="ECO:0000303"/>
    <property type="project" value="ComplexPortal"/>
</dbReference>
<dbReference type="GO" id="GO:0000011">
    <property type="term" value="P:vacuole inheritance"/>
    <property type="evidence" value="ECO:0000315"/>
    <property type="project" value="SGD"/>
</dbReference>
<dbReference type="CDD" id="cd10224">
    <property type="entry name" value="ASKHA_NBD_actin"/>
    <property type="match status" value="1"/>
</dbReference>
<dbReference type="FunFam" id="3.30.420.40:FF:000148">
    <property type="entry name" value="Actin, alpha skeletal muscle"/>
    <property type="match status" value="1"/>
</dbReference>
<dbReference type="FunFam" id="3.90.640.10:FF:000001">
    <property type="entry name" value="Actin, muscle"/>
    <property type="match status" value="1"/>
</dbReference>
<dbReference type="FunFam" id="3.30.420.40:FF:000404">
    <property type="entry name" value="Major actin"/>
    <property type="match status" value="1"/>
</dbReference>
<dbReference type="FunFam" id="3.30.420.40:FF:000058">
    <property type="entry name" value="Putative actin-related protein 5"/>
    <property type="match status" value="1"/>
</dbReference>
<dbReference type="Gene3D" id="3.30.420.40">
    <property type="match status" value="2"/>
</dbReference>
<dbReference type="Gene3D" id="3.90.640.10">
    <property type="entry name" value="Actin, Chain A, domain 4"/>
    <property type="match status" value="1"/>
</dbReference>
<dbReference type="InterPro" id="IPR004000">
    <property type="entry name" value="Actin"/>
</dbReference>
<dbReference type="InterPro" id="IPR020902">
    <property type="entry name" value="Actin/actin-like_CS"/>
</dbReference>
<dbReference type="InterPro" id="IPR004001">
    <property type="entry name" value="Actin_CS"/>
</dbReference>
<dbReference type="InterPro" id="IPR043129">
    <property type="entry name" value="ATPase_NBD"/>
</dbReference>
<dbReference type="PANTHER" id="PTHR11937">
    <property type="entry name" value="ACTIN"/>
    <property type="match status" value="1"/>
</dbReference>
<dbReference type="Pfam" id="PF00022">
    <property type="entry name" value="Actin"/>
    <property type="match status" value="1"/>
</dbReference>
<dbReference type="PRINTS" id="PR00190">
    <property type="entry name" value="ACTIN"/>
</dbReference>
<dbReference type="SMART" id="SM00268">
    <property type="entry name" value="ACTIN"/>
    <property type="match status" value="1"/>
</dbReference>
<dbReference type="SUPFAM" id="SSF53067">
    <property type="entry name" value="Actin-like ATPase domain"/>
    <property type="match status" value="2"/>
</dbReference>
<dbReference type="PROSITE" id="PS00406">
    <property type="entry name" value="ACTINS_1"/>
    <property type="match status" value="1"/>
</dbReference>
<dbReference type="PROSITE" id="PS00432">
    <property type="entry name" value="ACTINS_2"/>
    <property type="match status" value="1"/>
</dbReference>
<dbReference type="PROSITE" id="PS01132">
    <property type="entry name" value="ACTINS_ACT_LIKE"/>
    <property type="match status" value="1"/>
</dbReference>
<protein>
    <recommendedName>
        <fullName>Actin</fullName>
        <ecNumber evidence="7">3.6.4.-</ecNumber>
    </recommendedName>
</protein>
<reference key="1">
    <citation type="journal article" date="1980" name="Proc. Natl. Acad. Sci. U.S.A.">
        <title>Structure of a split yeast gene: complete nucleotide sequence of the actin gene in Saccharomyces cerevisiae.</title>
        <authorList>
            <person name="Gallwitz D."/>
            <person name="Sures I."/>
        </authorList>
    </citation>
    <scope>NUCLEOTIDE SEQUENCE [GENOMIC DNA]</scope>
</reference>
<reference key="2">
    <citation type="journal article" date="1980" name="Proc. Natl. Acad. Sci. U.S.A.">
        <title>Isolation and sequence of the gene for actin in Saccharomyces cerevisiae.</title>
        <authorList>
            <person name="Ng R."/>
            <person name="Abelson J."/>
        </authorList>
    </citation>
    <scope>NUCLEOTIDE SEQUENCE [GENOMIC DNA]</scope>
</reference>
<reference key="3">
    <citation type="journal article" date="1984" name="Cell">
        <title>Lariat structures are in vivo intermediates in yeast pre-mRNA splicing.</title>
        <authorList>
            <person name="Domdey H."/>
            <person name="Apostol B."/>
            <person name="Lin R.J."/>
            <person name="Newman A."/>
            <person name="Brody E."/>
            <person name="Abelson J."/>
        </authorList>
    </citation>
    <scope>NUCLEOTIDE SEQUENCE [GENOMIC DNA] OF 4-58</scope>
</reference>
<reference key="4">
    <citation type="journal article" date="1980" name="Nucleic Acids Res.">
        <title>Molecular cloning of the actin gene from yeast Saccharomyces cerevisiae.</title>
        <authorList>
            <person name="Gallwitz D."/>
            <person name="Seidel R."/>
        </authorList>
    </citation>
    <scope>NUCLEOTIDE SEQUENCE [GENOMIC DNA] OF 5-57</scope>
</reference>
<reference key="5">
    <citation type="journal article" date="1981" name="J. Mol. Appl. Genet.">
        <title>The nucleotide sequences of the actin genes from Saccharomyces carlsbergensis and Saccharomyces cerevisiae are identical except for their introns.</title>
        <authorList>
            <person name="Nellen W."/>
            <person name="Donath C."/>
            <person name="Moos M."/>
            <person name="Gallwitz D."/>
        </authorList>
    </citation>
    <scope>NUCLEOTIDE SEQUENCE [GENOMIC DNA]</scope>
    <source>
        <strain>Carlsbergensis</strain>
    </source>
</reference>
<reference key="6">
    <citation type="journal article" date="1995" name="Nat. Genet.">
        <title>Analysis of the nucleotide sequence of chromosome VI from Saccharomyces cerevisiae.</title>
        <authorList>
            <person name="Murakami Y."/>
            <person name="Naitou M."/>
            <person name="Hagiwara H."/>
            <person name="Shibata T."/>
            <person name="Ozawa M."/>
            <person name="Sasanuma S."/>
            <person name="Sasanuma M."/>
            <person name="Tsuchiya Y."/>
            <person name="Soeda E."/>
            <person name="Yokoyama K."/>
            <person name="Yamazaki M."/>
            <person name="Tashiro H."/>
            <person name="Eki T."/>
        </authorList>
    </citation>
    <scope>NUCLEOTIDE SEQUENCE [LARGE SCALE GENOMIC DNA]</scope>
    <source>
        <strain>ATCC 204508 / S288c</strain>
    </source>
</reference>
<reference key="7">
    <citation type="journal article" date="2014" name="G3 (Bethesda)">
        <title>The reference genome sequence of Saccharomyces cerevisiae: Then and now.</title>
        <authorList>
            <person name="Engel S.R."/>
            <person name="Dietrich F.S."/>
            <person name="Fisk D.G."/>
            <person name="Binkley G."/>
            <person name="Balakrishnan R."/>
            <person name="Costanzo M.C."/>
            <person name="Dwight S.S."/>
            <person name="Hitz B.C."/>
            <person name="Karra K."/>
            <person name="Nash R.S."/>
            <person name="Weng S."/>
            <person name="Wong E.D."/>
            <person name="Lloyd P."/>
            <person name="Skrzypek M.S."/>
            <person name="Miyasato S.R."/>
            <person name="Simison M."/>
            <person name="Cherry J.M."/>
        </authorList>
    </citation>
    <scope>GENOME REANNOTATION</scope>
    <source>
        <strain>ATCC 204508 / S288c</strain>
    </source>
</reference>
<reference key="8">
    <citation type="journal article" date="2001" name="Int. J. Syst. Evol. Microbiol.">
        <title>Partial sequence analysis of the actin gene and its potential for studying the phylogeny of Candida species and their teleomorphs.</title>
        <authorList>
            <person name="Daniel H.-M."/>
            <person name="Sorrell T.C."/>
            <person name="Meyer W."/>
        </authorList>
    </citation>
    <scope>NUCLEOTIDE SEQUENCE [GENOMIC DNA] OF 33-358</scope>
    <source>
        <strain>ATCC 18824 / CBS 1171 / DSM 70449 / IFO 10217 / NRRL Y-12632</strain>
        <strain>CBS 1907</strain>
    </source>
</reference>
<reference key="9">
    <citation type="journal article" date="1991" name="J. Biol. Chem.">
        <title>Unusual metabolism of the yeast actin amino terminus.</title>
        <authorList>
            <person name="Cook R.K."/>
            <person name="Sheff D.R."/>
            <person name="Rubenstein P.A."/>
        </authorList>
    </citation>
    <scope>ACETYLATION AT MET-1</scope>
    <scope>PROTEIN SEQUENCE OF N-TERMINUS</scope>
</reference>
<reference key="10">
    <citation type="journal article" date="1996" name="FEMS Microbiol. Lett.">
        <title>Protein expression during exponential growth in 0.7 M NaCl medium of Saccharomyces cerevisiae.</title>
        <authorList>
            <person name="Norbeck J."/>
            <person name="Blomberg A."/>
        </authorList>
    </citation>
    <scope>PROTEIN SEQUENCE OF 19-25</scope>
    <source>
        <strain>ATCC 38531 / Y41</strain>
    </source>
</reference>
<reference key="11">
    <citation type="journal article" date="1991" name="EMBO J.">
        <title>Site-directed mutagenesis of the yeast actin gene: a test for actin function in vivo.</title>
        <authorList>
            <person name="Johannes F.-Z."/>
            <person name="Gallwitz D."/>
        </authorList>
    </citation>
    <scope>MUTAGENESIS</scope>
</reference>
<reference key="12">
    <citation type="journal article" date="2004" name="J. Biol. Chem.">
        <title>YIH1 is an actin-binding protein that inhibits protein kinase GCN2 and impairs general amino acid control when overexpressed.</title>
        <authorList>
            <person name="Sattlegger E."/>
            <person name="Swanson M.J."/>
            <person name="Ashcraft E.A."/>
            <person name="Jennings J.L."/>
            <person name="Fekete R.A."/>
            <person name="Link A.J."/>
            <person name="Hinnebusch A.G."/>
        </authorList>
    </citation>
    <scope>INTERACTION WITH YIH1</scope>
</reference>
<reference key="13">
    <citation type="journal article" date="2008" name="Mol. Cell. Proteomics">
        <title>A multidimensional chromatography technology for in-depth phosphoproteome analysis.</title>
        <authorList>
            <person name="Albuquerque C.P."/>
            <person name="Smolka M.B."/>
            <person name="Payne S.H."/>
            <person name="Bafna V."/>
            <person name="Eng J."/>
            <person name="Zhou H."/>
        </authorList>
    </citation>
    <scope>IDENTIFICATION BY MASS SPECTROMETRY [LARGE SCALE ANALYSIS]</scope>
</reference>
<reference key="14">
    <citation type="journal article" date="2009" name="Science">
        <title>Global analysis of Cdk1 substrate phosphorylation sites provides insights into evolution.</title>
        <authorList>
            <person name="Holt L.J."/>
            <person name="Tuch B.B."/>
            <person name="Villen J."/>
            <person name="Johnson A.D."/>
            <person name="Gygi S.P."/>
            <person name="Morgan D.O."/>
        </authorList>
    </citation>
    <scope>IDENTIFICATION BY MASS SPECTROMETRY [LARGE SCALE ANALYSIS]</scope>
</reference>
<reference key="15">
    <citation type="journal article" date="2011" name="J. Biol. Chem.">
        <title>Gcn1 and actin binding to Yih1: implications for activation of the eIF2 kinase GCN2.</title>
        <authorList>
            <person name="Sattlegger E."/>
            <person name="Barbosa J.A."/>
            <person name="Moraes M.C."/>
            <person name="Martins R.M."/>
            <person name="Hinnebusch A.G."/>
            <person name="Castilho B.A."/>
        </authorList>
    </citation>
    <scope>INTERACTION WITH YIH1</scope>
</reference>
<reference key="16">
    <citation type="journal article" date="1999" name="Arch. Biochem. Biophys.">
        <title>A highly conserved 3-methylhistidine modification is absent in yeast actin.</title>
        <authorList>
            <person name="Kalhor H.R."/>
            <person name="Niewmierzycka A."/>
            <person name="Faull K.F."/>
            <person name="Yao X."/>
            <person name="Grade S."/>
            <person name="Clarke S."/>
            <person name="Rubenstein P.A."/>
        </authorList>
    </citation>
    <scope>IDENTIFICATION BY MASS SPECTROMETRY</scope>
    <scope>LACK OF METHYLATION AT HIS-73</scope>
</reference>
<reference key="17">
    <citation type="journal article" date="2012" name="Proc. Natl. Acad. Sci. U.S.A.">
        <title>N-terminal acetylome analyses and functional insights of the N-terminal acetyltransferase NatB.</title>
        <authorList>
            <person name="Van Damme P."/>
            <person name="Lasa M."/>
            <person name="Polevoda B."/>
            <person name="Gazquez C."/>
            <person name="Elosegui-Artola A."/>
            <person name="Kim D.S."/>
            <person name="De Juan-Pardo E."/>
            <person name="Demeyer K."/>
            <person name="Hole K."/>
            <person name="Larrea E."/>
            <person name="Timmerman E."/>
            <person name="Prieto J."/>
            <person name="Arnesen T."/>
            <person name="Sherman F."/>
            <person name="Gevaert K."/>
            <person name="Aldabe R."/>
        </authorList>
    </citation>
    <scope>ACETYLATION [LARGE SCALE ANALYSIS] AT MET-1</scope>
    <scope>IDENTIFICATION BY MASS SPECTROMETRY [LARGE SCALE ANALYSIS]</scope>
</reference>
<reference key="18">
    <citation type="journal article" date="2012" name="Proteomics">
        <title>Sites of ubiquitin attachment in Saccharomyces cerevisiae.</title>
        <authorList>
            <person name="Starita L.M."/>
            <person name="Lo R.S."/>
            <person name="Eng J.K."/>
            <person name="von Haller P.D."/>
            <person name="Fields S."/>
        </authorList>
    </citation>
    <scope>UBIQUITINATION [LARGE SCALE ANALYSIS] AT LYS-191</scope>
    <scope>IDENTIFICATION BY MASS SPECTROMETRY [LARGE SCALE ANALYSIS]</scope>
</reference>
<reference key="19">
    <citation type="journal article" date="2017" name="ACS Chem. Biol.">
        <title>Direct Interaction of Chivosazole F with Actin Elicits Cell Responses Similar to Latrunculin A but Distinct from Chondramide.</title>
        <authorList>
            <person name="Filipuzzi I."/>
            <person name="Thomas J.R."/>
            <person name="Pries V."/>
            <person name="Estoppey D."/>
            <person name="Salcius M."/>
            <person name="Studer C."/>
            <person name="Schirle M."/>
            <person name="Hoepfner D."/>
        </authorList>
    </citation>
    <scope>SUBUNIT</scope>
    <scope>MUTAGENESIS OF ARG-183 AND ARG-335</scope>
</reference>
<reference key="20">
    <citation type="journal article" date="2003" name="Proc. Natl. Acad. Sci. U.S.A.">
        <title>The structure of nonvertebrate actin: implications for the ATP hydrolytic mechanism.</title>
        <authorList>
            <person name="Vorobiev S."/>
            <person name="Strokopytov B."/>
            <person name="Drubin D.G."/>
            <person name="Frieden C."/>
            <person name="Ono S."/>
            <person name="Condeelis J."/>
            <person name="Rubenstein P.A."/>
            <person name="Almo S.C."/>
        </authorList>
    </citation>
    <scope>X-RAY CRYSTALLOGRAPHY (1.9 ANGSTROMS)</scope>
    <scope>CATALYTIC ACTIVITY</scope>
</reference>
<evidence type="ECO:0000269" key="1">
    <source>
    </source>
</evidence>
<evidence type="ECO:0000269" key="2">
    <source>
    </source>
</evidence>
<evidence type="ECO:0000269" key="3">
    <source>
    </source>
</evidence>
<evidence type="ECO:0000269" key="4">
    <source>
    </source>
</evidence>
<evidence type="ECO:0000269" key="5">
    <source>
    </source>
</evidence>
<evidence type="ECO:0000305" key="6"/>
<evidence type="ECO:0000305" key="7">
    <source>
    </source>
</evidence>
<evidence type="ECO:0007744" key="8">
    <source>
    </source>
</evidence>
<evidence type="ECO:0007744" key="9">
    <source>
    </source>
</evidence>
<evidence type="ECO:0007829" key="10">
    <source>
        <dbReference type="PDB" id="1YAG"/>
    </source>
</evidence>
<evidence type="ECO:0007829" key="11">
    <source>
        <dbReference type="PDB" id="1YVN"/>
    </source>
</evidence>
<evidence type="ECO:0007829" key="12">
    <source>
        <dbReference type="PDB" id="5NBM"/>
    </source>
</evidence>
<evidence type="ECO:0007829" key="13">
    <source>
        <dbReference type="PDB" id="8ESC"/>
    </source>
</evidence>
<gene>
    <name type="primary">ACT1</name>
    <name type="synonym">ABY1</name>
    <name type="synonym">END7</name>
    <name type="ordered locus">YFL039C</name>
</gene>
<sequence>MDSEVAALVIDNGSGMCKAGFAGDDAPRAVFPSIVGRPRHQGIMVGMGQKDSYVGDEAQSKRGILTLRYPIEHGIVTNWDDMEKIWHHTFYNELRVAPEEHPVLLTEAPMNPKSNREKMTQIMFETFNVPAFYVSIQAVLSLYSSGRTTGIVLDSGDGVTHVVPIYAGFSLPHAILRIDLAGRDLTDYLMKILSERGYSFSTTAEREIVRDIKEKLCYVALDFEQEMQTAAQSSSIEKSYELPDGQVITIGNERFRAPEALFHPSVLGLESAGIDQTTYNSIMKCDVDVRKELYGNIVMSGGTTMFPGIAERMQKEITALAPSSMKVKIIAPPERKYSVWIGGSILASLTTFQQMWISKQEYDESGPSIVHHKCF</sequence>